<geneLocation type="plasmid" evidence="6 7">
    <name>pTT27</name>
</geneLocation>
<protein>
    <recommendedName>
        <fullName evidence="5">Transcriptional regulator LdrP</fullName>
    </recommendedName>
    <alternativeName>
        <fullName evidence="4 5">Cyclic AMP receptor protein/Fumarate and nitrate reduction regulator superfamily protein LdrP</fullName>
        <shortName evidence="4 5">CRP/FNR superfamily protein LdrP</shortName>
    </alternativeName>
    <alternativeName>
        <fullName evidence="4">Light induced transcription regulator-dependent regulatory protein</fullName>
    </alternativeName>
    <alternativeName>
        <fullName evidence="5">LitR-dependent regulatory protein</fullName>
        <shortName evidence="5">LdrP</shortName>
    </alternativeName>
</protein>
<dbReference type="EMBL" id="AE017222">
    <property type="protein sequence ID" value="AAS82385.1"/>
    <property type="molecule type" value="Genomic_DNA"/>
</dbReference>
<dbReference type="RefSeq" id="WP_011174504.1">
    <property type="nucleotide sequence ID" value="NC_005838.1"/>
</dbReference>
<dbReference type="SMR" id="Q746J8"/>
<dbReference type="KEGG" id="tth:TT_P0055"/>
<dbReference type="eggNOG" id="COG0664">
    <property type="taxonomic scope" value="Bacteria"/>
</dbReference>
<dbReference type="HOGENOM" id="CLU_075053_3_1_0"/>
<dbReference type="OrthoDB" id="9812325at2"/>
<dbReference type="Proteomes" id="UP000000592">
    <property type="component" value="Plasmid pTT27"/>
</dbReference>
<dbReference type="GO" id="GO:0005829">
    <property type="term" value="C:cytosol"/>
    <property type="evidence" value="ECO:0007669"/>
    <property type="project" value="TreeGrafter"/>
</dbReference>
<dbReference type="GO" id="GO:0003677">
    <property type="term" value="F:DNA binding"/>
    <property type="evidence" value="ECO:0000314"/>
    <property type="project" value="UniProtKB"/>
</dbReference>
<dbReference type="GO" id="GO:0003700">
    <property type="term" value="F:DNA-binding transcription factor activity"/>
    <property type="evidence" value="ECO:0000314"/>
    <property type="project" value="UniProtKB"/>
</dbReference>
<dbReference type="GO" id="GO:0071482">
    <property type="term" value="P:cellular response to light stimulus"/>
    <property type="evidence" value="ECO:0000314"/>
    <property type="project" value="UniProtKB"/>
</dbReference>
<dbReference type="GO" id="GO:1904143">
    <property type="term" value="P:positive regulation of carotenoid biosynthetic process"/>
    <property type="evidence" value="ECO:0000315"/>
    <property type="project" value="UniProtKB"/>
</dbReference>
<dbReference type="CDD" id="cd00038">
    <property type="entry name" value="CAP_ED"/>
    <property type="match status" value="1"/>
</dbReference>
<dbReference type="FunFam" id="1.10.10.10:FF:000019">
    <property type="entry name" value="Crp/Fnr family transcriptional regulator"/>
    <property type="match status" value="1"/>
</dbReference>
<dbReference type="Gene3D" id="2.60.120.10">
    <property type="entry name" value="Jelly Rolls"/>
    <property type="match status" value="1"/>
</dbReference>
<dbReference type="Gene3D" id="1.10.10.10">
    <property type="entry name" value="Winged helix-like DNA-binding domain superfamily/Winged helix DNA-binding domain"/>
    <property type="match status" value="1"/>
</dbReference>
<dbReference type="InterPro" id="IPR000595">
    <property type="entry name" value="cNMP-bd_dom"/>
</dbReference>
<dbReference type="InterPro" id="IPR018490">
    <property type="entry name" value="cNMP-bd_dom_sf"/>
</dbReference>
<dbReference type="InterPro" id="IPR050397">
    <property type="entry name" value="Env_Response_Regulators"/>
</dbReference>
<dbReference type="InterPro" id="IPR012318">
    <property type="entry name" value="HTH_CRP"/>
</dbReference>
<dbReference type="InterPro" id="IPR014710">
    <property type="entry name" value="RmlC-like_jellyroll"/>
</dbReference>
<dbReference type="InterPro" id="IPR036388">
    <property type="entry name" value="WH-like_DNA-bd_sf"/>
</dbReference>
<dbReference type="InterPro" id="IPR036390">
    <property type="entry name" value="WH_DNA-bd_sf"/>
</dbReference>
<dbReference type="PANTHER" id="PTHR24567">
    <property type="entry name" value="CRP FAMILY TRANSCRIPTIONAL REGULATORY PROTEIN"/>
    <property type="match status" value="1"/>
</dbReference>
<dbReference type="PANTHER" id="PTHR24567:SF74">
    <property type="entry name" value="HTH-TYPE TRANSCRIPTIONAL REGULATOR ARCR"/>
    <property type="match status" value="1"/>
</dbReference>
<dbReference type="Pfam" id="PF00027">
    <property type="entry name" value="cNMP_binding"/>
    <property type="match status" value="1"/>
</dbReference>
<dbReference type="Pfam" id="PF13545">
    <property type="entry name" value="HTH_Crp_2"/>
    <property type="match status" value="1"/>
</dbReference>
<dbReference type="SMART" id="SM00100">
    <property type="entry name" value="cNMP"/>
    <property type="match status" value="1"/>
</dbReference>
<dbReference type="SMART" id="SM00419">
    <property type="entry name" value="HTH_CRP"/>
    <property type="match status" value="1"/>
</dbReference>
<dbReference type="SUPFAM" id="SSF51206">
    <property type="entry name" value="cAMP-binding domain-like"/>
    <property type="match status" value="1"/>
</dbReference>
<dbReference type="SUPFAM" id="SSF46785">
    <property type="entry name" value="Winged helix' DNA-binding domain"/>
    <property type="match status" value="1"/>
</dbReference>
<dbReference type="PROSITE" id="PS50042">
    <property type="entry name" value="CNMP_BINDING_3"/>
    <property type="match status" value="1"/>
</dbReference>
<dbReference type="PROSITE" id="PS51063">
    <property type="entry name" value="HTH_CRP_2"/>
    <property type="match status" value="1"/>
</dbReference>
<organism evidence="6">
    <name type="scientific">Thermus thermophilus (strain ATCC BAA-163 / DSM 7039 / HB27)</name>
    <dbReference type="NCBI Taxonomy" id="262724"/>
    <lineage>
        <taxon>Bacteria</taxon>
        <taxon>Thermotogati</taxon>
        <taxon>Deinococcota</taxon>
        <taxon>Deinococci</taxon>
        <taxon>Thermales</taxon>
        <taxon>Thermaceae</taxon>
        <taxon>Thermus</taxon>
    </lineage>
</organism>
<accession>Q746J8</accession>
<evidence type="ECO:0000255" key="1">
    <source>
        <dbReference type="PROSITE-ProRule" id="PRU00387"/>
    </source>
</evidence>
<evidence type="ECO:0000269" key="2">
    <source>
    </source>
</evidence>
<evidence type="ECO:0000269" key="3">
    <source>
    </source>
</evidence>
<evidence type="ECO:0000303" key="4">
    <source>
    </source>
</evidence>
<evidence type="ECO:0000303" key="5">
    <source>
    </source>
</evidence>
<evidence type="ECO:0000312" key="6">
    <source>
        <dbReference type="EMBL" id="AAS82385.1"/>
    </source>
</evidence>
<evidence type="ECO:0000312" key="7">
    <source>
        <dbReference type="Proteomes" id="UP000000592"/>
    </source>
</evidence>
<gene>
    <name evidence="6" type="ordered locus">TT_P0055</name>
</gene>
<sequence>MKRFARKETIYLRGEEARTLYRLEEGLVRVVELLPDGRLITLRHVLPGDYFGEEALEGKAYRYTAEAMTEAVVQGLDPRAMDHEALHRVARNLARQMRRVQAYEAHLQTGELRARIARYLLFLADTPLSARDRQGIYVTVSHEEIADATASIRESVSKVLADLRREGLIATAYRRVYLLDLAALEREAGSALEAA</sequence>
<reference evidence="6 7" key="1">
    <citation type="journal article" date="2004" name="Nat. Biotechnol.">
        <title>The genome sequence of the extreme thermophile Thermus thermophilus.</title>
        <authorList>
            <person name="Henne A."/>
            <person name="Brueggemann H."/>
            <person name="Raasch C."/>
            <person name="Wiezer A."/>
            <person name="Hartsch T."/>
            <person name="Liesegang H."/>
            <person name="Johann A."/>
            <person name="Lienard T."/>
            <person name="Gohl O."/>
            <person name="Martinez-Arias R."/>
            <person name="Jacobi C."/>
            <person name="Starkuviene V."/>
            <person name="Schlenczeck S."/>
            <person name="Dencker S."/>
            <person name="Huber R."/>
            <person name="Klenk H.-P."/>
            <person name="Kramer W."/>
            <person name="Merkl R."/>
            <person name="Gottschalk G."/>
            <person name="Fritz H.-J."/>
        </authorList>
    </citation>
    <scope>NUCLEOTIDE SEQUENCE [LARGE SCALE GENOMIC DNA]</scope>
    <source>
        <strain evidence="7">ATCC BAA-163 / DSM 7039 / HB27</strain>
    </source>
</reference>
<reference key="2">
    <citation type="journal article" date="2011" name="J. Bacteriol.">
        <title>Involvement of CarA/LitR and CRP/FNR family transcriptional regulators in light-induced carotenoid production in Thermus thermophilus.</title>
        <authorList>
            <person name="Takano H."/>
            <person name="Kondo M."/>
            <person name="Usui N."/>
            <person name="Usui T."/>
            <person name="Ohzeki H."/>
            <person name="Yamazaki R."/>
            <person name="Washioka M."/>
            <person name="Nakamura A."/>
            <person name="Hoshino T."/>
            <person name="Hakamata W."/>
            <person name="Beppu T."/>
            <person name="Ueda K."/>
        </authorList>
    </citation>
    <scope>FUNCTION</scope>
    <scope>DISRUPTION PHENOTYPE</scope>
    <source>
        <strain evidence="4">ATCC BAA-163 / DSM 7039 / HB27</strain>
    </source>
</reference>
<reference key="3">
    <citation type="journal article" date="2014" name="Microbiology">
        <title>LdrP, a cAMP receptor protein/FNR family transcriptional regulator, serves as a positive regulator for the light-inducible gene cluster in the megaplasmid of Thermus thermophilus.</title>
        <authorList>
            <person name="Takano H."/>
            <person name="Agari Y."/>
            <person name="Hagiwara K."/>
            <person name="Watanabe R."/>
            <person name="Yamazaki R."/>
            <person name="Beppu T."/>
            <person name="Shinkai A."/>
            <person name="Ueda K."/>
        </authorList>
    </citation>
    <scope>FUNCTION</scope>
    <scope>DISRUPTION PHENOTYPE</scope>
    <source>
        <strain evidence="5">ATCC BAA-163 / DSM 7039 / HB27</strain>
    </source>
</reference>
<keyword id="KW-0238">DNA-binding</keyword>
<keyword id="KW-0614">Plasmid</keyword>
<keyword id="KW-0804">Transcription</keyword>
<keyword id="KW-0805">Transcription regulation</keyword>
<name>LDRP_THET2</name>
<comment type="function">
    <text evidence="2 3">Activates transcription. Positively regulates PcrtB promoter upstream of the crtB operon in a cAMP-independent manner. Regulated genes include genes encoding DNA photolyase, phytoene synthase and cytochrome P450 monooxygenase, which are involved in carotenoid biosynthesis (PubMed:21421762). Positively regulates the light-inducible gene cluster in the megaplasmid in a cAMP-independent manner (PubMed:25294106).</text>
</comment>
<comment type="disruption phenotype">
    <text evidence="2 3">No production of carotenoids in dark or light conditions (PubMed:21421762). Does not activate expression of TT_P0044, TT_P0049 or TT_P0070 in dark or light conditions (PubMed:25294106).</text>
</comment>
<proteinExistence type="predicted"/>
<feature type="chain" id="PRO_0000436260" description="Transcriptional regulator LdrP">
    <location>
        <begin position="1"/>
        <end position="195"/>
    </location>
</feature>
<feature type="domain" description="HTH crp-type" evidence="1">
    <location>
        <begin position="110"/>
        <end position="182"/>
    </location>
</feature>
<feature type="DNA-binding region" description="H-T-H motif" evidence="1">
    <location>
        <begin position="142"/>
        <end position="161"/>
    </location>
</feature>